<comment type="function">
    <text evidence="1">Converts the preformed base xanthine, a product of nucleic acid breakdown, to xanthosine 5'-monophosphate (XMP), so it can be reused for RNA or DNA synthesis.</text>
</comment>
<comment type="catalytic activity">
    <reaction evidence="1">
        <text>XMP + diphosphate = xanthine + 5-phospho-alpha-D-ribose 1-diphosphate</text>
        <dbReference type="Rhea" id="RHEA:10800"/>
        <dbReference type="ChEBI" id="CHEBI:17712"/>
        <dbReference type="ChEBI" id="CHEBI:33019"/>
        <dbReference type="ChEBI" id="CHEBI:57464"/>
        <dbReference type="ChEBI" id="CHEBI:58017"/>
        <dbReference type="EC" id="2.4.2.22"/>
    </reaction>
</comment>
<comment type="pathway">
    <text evidence="1">Purine metabolism; XMP biosynthesis via salvage pathway; XMP from xanthine: step 1/1.</text>
</comment>
<comment type="subunit">
    <text evidence="1">Homodimer.</text>
</comment>
<comment type="subcellular location">
    <subcellularLocation>
        <location evidence="1">Cytoplasm</location>
    </subcellularLocation>
</comment>
<comment type="similarity">
    <text evidence="1">Belongs to the purine/pyrimidine phosphoribosyltransferase family. Xpt subfamily.</text>
</comment>
<comment type="sequence caution" evidence="2">
    <conflict type="erroneous initiation">
        <sequence resource="EMBL-CDS" id="CAG69853"/>
    </conflict>
</comment>
<name>XPT_ACIAD</name>
<keyword id="KW-0963">Cytoplasm</keyword>
<keyword id="KW-0328">Glycosyltransferase</keyword>
<keyword id="KW-0660">Purine salvage</keyword>
<keyword id="KW-0808">Transferase</keyword>
<proteinExistence type="inferred from homology"/>
<accession>Q6F7W2</accession>
<feature type="chain" id="PRO_0000339656" description="Xanthine phosphoribosyltransferase">
    <location>
        <begin position="1"/>
        <end position="191"/>
    </location>
</feature>
<feature type="binding site" evidence="1">
    <location>
        <position position="20"/>
    </location>
    <ligand>
        <name>xanthine</name>
        <dbReference type="ChEBI" id="CHEBI:17712"/>
    </ligand>
</feature>
<feature type="binding site" evidence="1">
    <location>
        <position position="27"/>
    </location>
    <ligand>
        <name>xanthine</name>
        <dbReference type="ChEBI" id="CHEBI:17712"/>
    </ligand>
</feature>
<feature type="binding site" evidence="1">
    <location>
        <begin position="128"/>
        <end position="132"/>
    </location>
    <ligand>
        <name>5-phospho-alpha-D-ribose 1-diphosphate</name>
        <dbReference type="ChEBI" id="CHEBI:58017"/>
    </ligand>
</feature>
<feature type="binding site" evidence="1">
    <location>
        <position position="156"/>
    </location>
    <ligand>
        <name>xanthine</name>
        <dbReference type="ChEBI" id="CHEBI:17712"/>
    </ligand>
</feature>
<reference key="1">
    <citation type="journal article" date="2004" name="Nucleic Acids Res.">
        <title>Unique features revealed by the genome sequence of Acinetobacter sp. ADP1, a versatile and naturally transformation competent bacterium.</title>
        <authorList>
            <person name="Barbe V."/>
            <person name="Vallenet D."/>
            <person name="Fonknechten N."/>
            <person name="Kreimeyer A."/>
            <person name="Oztas S."/>
            <person name="Labarre L."/>
            <person name="Cruveiller S."/>
            <person name="Robert C."/>
            <person name="Duprat S."/>
            <person name="Wincker P."/>
            <person name="Ornston L.N."/>
            <person name="Weissenbach J."/>
            <person name="Marliere P."/>
            <person name="Cohen G.N."/>
            <person name="Medigue C."/>
        </authorList>
    </citation>
    <scope>NUCLEOTIDE SEQUENCE [LARGE SCALE GENOMIC DNA]</scope>
    <source>
        <strain>ATCC 33305 / BD413 / ADP1</strain>
    </source>
</reference>
<organism>
    <name type="scientific">Acinetobacter baylyi (strain ATCC 33305 / BD413 / ADP1)</name>
    <dbReference type="NCBI Taxonomy" id="62977"/>
    <lineage>
        <taxon>Bacteria</taxon>
        <taxon>Pseudomonadati</taxon>
        <taxon>Pseudomonadota</taxon>
        <taxon>Gammaproteobacteria</taxon>
        <taxon>Moraxellales</taxon>
        <taxon>Moraxellaceae</taxon>
        <taxon>Acinetobacter</taxon>
    </lineage>
</organism>
<evidence type="ECO:0000255" key="1">
    <source>
        <dbReference type="HAMAP-Rule" id="MF_01184"/>
    </source>
</evidence>
<evidence type="ECO:0000305" key="2"/>
<sequence>MYALEQKILNEGIVLSDQVLKVDAFLNHQIDPVLMQQIGKEFAARFKDTGITKIVTIEASGIAPAVMAGLELGVPVIFARKYQSLTLKDDLYRSKVFSFTKQVESTIAISNKHINAEDKVLVIDDFLANGQAALGLIDLIHQANADIVGVGIVIEKSFQPGRDLLLEKGYRVESLARVASLTNGQVTFVIE</sequence>
<gene>
    <name evidence="1" type="primary">xpt</name>
    <name type="ordered locus">ACIAD3164</name>
</gene>
<protein>
    <recommendedName>
        <fullName evidence="1">Xanthine phosphoribosyltransferase</fullName>
        <shortName evidence="1">XPRTase</shortName>
        <ecNumber evidence="1">2.4.2.22</ecNumber>
    </recommendedName>
</protein>
<dbReference type="EC" id="2.4.2.22" evidence="1"/>
<dbReference type="EMBL" id="CR543861">
    <property type="protein sequence ID" value="CAG69853.1"/>
    <property type="status" value="ALT_INIT"/>
    <property type="molecule type" value="Genomic_DNA"/>
</dbReference>
<dbReference type="RefSeq" id="WP_004924242.1">
    <property type="nucleotide sequence ID" value="NC_005966.1"/>
</dbReference>
<dbReference type="SMR" id="Q6F7W2"/>
<dbReference type="STRING" id="202950.GCA_001485005_02990"/>
<dbReference type="GeneID" id="45235381"/>
<dbReference type="KEGG" id="aci:ACIAD3164"/>
<dbReference type="eggNOG" id="COG0503">
    <property type="taxonomic scope" value="Bacteria"/>
</dbReference>
<dbReference type="HOGENOM" id="CLU_099015_0_0_6"/>
<dbReference type="OrthoDB" id="9790678at2"/>
<dbReference type="BioCyc" id="ASP62977:ACIAD_RS14330-MONOMER"/>
<dbReference type="UniPathway" id="UPA00602">
    <property type="reaction ID" value="UER00658"/>
</dbReference>
<dbReference type="Proteomes" id="UP000000430">
    <property type="component" value="Chromosome"/>
</dbReference>
<dbReference type="GO" id="GO:0005737">
    <property type="term" value="C:cytoplasm"/>
    <property type="evidence" value="ECO:0007669"/>
    <property type="project" value="UniProtKB-SubCell"/>
</dbReference>
<dbReference type="GO" id="GO:0000310">
    <property type="term" value="F:xanthine phosphoribosyltransferase activity"/>
    <property type="evidence" value="ECO:0007669"/>
    <property type="project" value="UniProtKB-UniRule"/>
</dbReference>
<dbReference type="GO" id="GO:0006166">
    <property type="term" value="P:purine ribonucleoside salvage"/>
    <property type="evidence" value="ECO:0007669"/>
    <property type="project" value="UniProtKB-KW"/>
</dbReference>
<dbReference type="GO" id="GO:0046110">
    <property type="term" value="P:xanthine metabolic process"/>
    <property type="evidence" value="ECO:0007669"/>
    <property type="project" value="InterPro"/>
</dbReference>
<dbReference type="GO" id="GO:0032265">
    <property type="term" value="P:XMP salvage"/>
    <property type="evidence" value="ECO:0007669"/>
    <property type="project" value="UniProtKB-UniRule"/>
</dbReference>
<dbReference type="CDD" id="cd06223">
    <property type="entry name" value="PRTases_typeI"/>
    <property type="match status" value="1"/>
</dbReference>
<dbReference type="Gene3D" id="3.40.50.2020">
    <property type="match status" value="1"/>
</dbReference>
<dbReference type="HAMAP" id="MF_01184">
    <property type="entry name" value="XPRTase"/>
    <property type="match status" value="1"/>
</dbReference>
<dbReference type="InterPro" id="IPR000836">
    <property type="entry name" value="PRibTrfase_dom"/>
</dbReference>
<dbReference type="InterPro" id="IPR029057">
    <property type="entry name" value="PRTase-like"/>
</dbReference>
<dbReference type="InterPro" id="IPR050118">
    <property type="entry name" value="Pur/Pyrimidine_PRTase"/>
</dbReference>
<dbReference type="InterPro" id="IPR010079">
    <property type="entry name" value="Xanthine_PRibTrfase"/>
</dbReference>
<dbReference type="NCBIfam" id="NF006671">
    <property type="entry name" value="PRK09219.1"/>
    <property type="match status" value="1"/>
</dbReference>
<dbReference type="NCBIfam" id="TIGR01744">
    <property type="entry name" value="XPRTase"/>
    <property type="match status" value="1"/>
</dbReference>
<dbReference type="PANTHER" id="PTHR43864">
    <property type="entry name" value="HYPOXANTHINE/GUANINE PHOSPHORIBOSYLTRANSFERASE"/>
    <property type="match status" value="1"/>
</dbReference>
<dbReference type="PANTHER" id="PTHR43864:SF1">
    <property type="entry name" value="XANTHINE PHOSPHORIBOSYLTRANSFERASE"/>
    <property type="match status" value="1"/>
</dbReference>
<dbReference type="Pfam" id="PF00156">
    <property type="entry name" value="Pribosyltran"/>
    <property type="match status" value="1"/>
</dbReference>
<dbReference type="SUPFAM" id="SSF53271">
    <property type="entry name" value="PRTase-like"/>
    <property type="match status" value="1"/>
</dbReference>